<keyword id="KW-0963">Cytoplasm</keyword>
<keyword id="KW-0255">Endonuclease</keyword>
<keyword id="KW-0378">Hydrolase</keyword>
<keyword id="KW-0464">Manganese</keyword>
<keyword id="KW-0479">Metal-binding</keyword>
<keyword id="KW-0540">Nuclease</keyword>
<name>RNH2_LISIN</name>
<protein>
    <recommendedName>
        <fullName evidence="1">Ribonuclease HII</fullName>
        <shortName evidence="1">RNase HII</shortName>
        <ecNumber evidence="1">3.1.26.4</ecNumber>
    </recommendedName>
</protein>
<accession>Q92C79</accession>
<reference key="1">
    <citation type="journal article" date="2001" name="Science">
        <title>Comparative genomics of Listeria species.</title>
        <authorList>
            <person name="Glaser P."/>
            <person name="Frangeul L."/>
            <person name="Buchrieser C."/>
            <person name="Rusniok C."/>
            <person name="Amend A."/>
            <person name="Baquero F."/>
            <person name="Berche P."/>
            <person name="Bloecker H."/>
            <person name="Brandt P."/>
            <person name="Chakraborty T."/>
            <person name="Charbit A."/>
            <person name="Chetouani F."/>
            <person name="Couve E."/>
            <person name="de Daruvar A."/>
            <person name="Dehoux P."/>
            <person name="Domann E."/>
            <person name="Dominguez-Bernal G."/>
            <person name="Duchaud E."/>
            <person name="Durant L."/>
            <person name="Dussurget O."/>
            <person name="Entian K.-D."/>
            <person name="Fsihi H."/>
            <person name="Garcia-del Portillo F."/>
            <person name="Garrido P."/>
            <person name="Gautier L."/>
            <person name="Goebel W."/>
            <person name="Gomez-Lopez N."/>
            <person name="Hain T."/>
            <person name="Hauf J."/>
            <person name="Jackson D."/>
            <person name="Jones L.-M."/>
            <person name="Kaerst U."/>
            <person name="Kreft J."/>
            <person name="Kuhn M."/>
            <person name="Kunst F."/>
            <person name="Kurapkat G."/>
            <person name="Madueno E."/>
            <person name="Maitournam A."/>
            <person name="Mata Vicente J."/>
            <person name="Ng E."/>
            <person name="Nedjari H."/>
            <person name="Nordsiek G."/>
            <person name="Novella S."/>
            <person name="de Pablos B."/>
            <person name="Perez-Diaz J.-C."/>
            <person name="Purcell R."/>
            <person name="Remmel B."/>
            <person name="Rose M."/>
            <person name="Schlueter T."/>
            <person name="Simoes N."/>
            <person name="Tierrez A."/>
            <person name="Vazquez-Boland J.-A."/>
            <person name="Voss H."/>
            <person name="Wehland J."/>
            <person name="Cossart P."/>
        </authorList>
    </citation>
    <scope>NUCLEOTIDE SEQUENCE [LARGE SCALE GENOMIC DNA]</scope>
    <source>
        <strain>ATCC BAA-680 / CLIP 11262</strain>
    </source>
</reference>
<evidence type="ECO:0000255" key="1">
    <source>
        <dbReference type="HAMAP-Rule" id="MF_00052"/>
    </source>
</evidence>
<evidence type="ECO:0000255" key="2">
    <source>
        <dbReference type="PROSITE-ProRule" id="PRU01319"/>
    </source>
</evidence>
<feature type="chain" id="PRO_0000111586" description="Ribonuclease HII">
    <location>
        <begin position="1"/>
        <end position="261"/>
    </location>
</feature>
<feature type="domain" description="RNase H type-2" evidence="2">
    <location>
        <begin position="71"/>
        <end position="259"/>
    </location>
</feature>
<feature type="binding site" evidence="1">
    <location>
        <position position="77"/>
    </location>
    <ligand>
        <name>a divalent metal cation</name>
        <dbReference type="ChEBI" id="CHEBI:60240"/>
    </ligand>
</feature>
<feature type="binding site" evidence="1">
    <location>
        <position position="78"/>
    </location>
    <ligand>
        <name>a divalent metal cation</name>
        <dbReference type="ChEBI" id="CHEBI:60240"/>
    </ligand>
</feature>
<feature type="binding site" evidence="1">
    <location>
        <position position="169"/>
    </location>
    <ligand>
        <name>a divalent metal cation</name>
        <dbReference type="ChEBI" id="CHEBI:60240"/>
    </ligand>
</feature>
<dbReference type="EC" id="3.1.26.4" evidence="1"/>
<dbReference type="EMBL" id="AL596168">
    <property type="protein sequence ID" value="CAC96543.1"/>
    <property type="molecule type" value="Genomic_DNA"/>
</dbReference>
<dbReference type="PIR" id="AG1596">
    <property type="entry name" value="AG1596"/>
</dbReference>
<dbReference type="RefSeq" id="WP_010990918.1">
    <property type="nucleotide sequence ID" value="NC_003212.1"/>
</dbReference>
<dbReference type="SMR" id="Q92C79"/>
<dbReference type="STRING" id="272626.gene:17565643"/>
<dbReference type="GeneID" id="93234692"/>
<dbReference type="KEGG" id="lin:rnhB"/>
<dbReference type="eggNOG" id="COG0164">
    <property type="taxonomic scope" value="Bacteria"/>
</dbReference>
<dbReference type="HOGENOM" id="CLU_036532_2_1_9"/>
<dbReference type="OrthoDB" id="9803420at2"/>
<dbReference type="Proteomes" id="UP000002513">
    <property type="component" value="Chromosome"/>
</dbReference>
<dbReference type="GO" id="GO:0005737">
    <property type="term" value="C:cytoplasm"/>
    <property type="evidence" value="ECO:0007669"/>
    <property type="project" value="UniProtKB-SubCell"/>
</dbReference>
<dbReference type="GO" id="GO:0032299">
    <property type="term" value="C:ribonuclease H2 complex"/>
    <property type="evidence" value="ECO:0007669"/>
    <property type="project" value="TreeGrafter"/>
</dbReference>
<dbReference type="GO" id="GO:0030145">
    <property type="term" value="F:manganese ion binding"/>
    <property type="evidence" value="ECO:0007669"/>
    <property type="project" value="UniProtKB-UniRule"/>
</dbReference>
<dbReference type="GO" id="GO:0003723">
    <property type="term" value="F:RNA binding"/>
    <property type="evidence" value="ECO:0007669"/>
    <property type="project" value="InterPro"/>
</dbReference>
<dbReference type="GO" id="GO:0004523">
    <property type="term" value="F:RNA-DNA hybrid ribonuclease activity"/>
    <property type="evidence" value="ECO:0007669"/>
    <property type="project" value="UniProtKB-UniRule"/>
</dbReference>
<dbReference type="GO" id="GO:0043137">
    <property type="term" value="P:DNA replication, removal of RNA primer"/>
    <property type="evidence" value="ECO:0007669"/>
    <property type="project" value="TreeGrafter"/>
</dbReference>
<dbReference type="GO" id="GO:0006298">
    <property type="term" value="P:mismatch repair"/>
    <property type="evidence" value="ECO:0007669"/>
    <property type="project" value="TreeGrafter"/>
</dbReference>
<dbReference type="CDD" id="cd07182">
    <property type="entry name" value="RNase_HII_bacteria_HII_like"/>
    <property type="match status" value="1"/>
</dbReference>
<dbReference type="FunFam" id="3.30.420.10:FF:000006">
    <property type="entry name" value="Ribonuclease HII"/>
    <property type="match status" value="1"/>
</dbReference>
<dbReference type="Gene3D" id="3.30.420.10">
    <property type="entry name" value="Ribonuclease H-like superfamily/Ribonuclease H"/>
    <property type="match status" value="1"/>
</dbReference>
<dbReference type="HAMAP" id="MF_00052_B">
    <property type="entry name" value="RNase_HII_B"/>
    <property type="match status" value="1"/>
</dbReference>
<dbReference type="InterPro" id="IPR022898">
    <property type="entry name" value="RNase_HII"/>
</dbReference>
<dbReference type="InterPro" id="IPR001352">
    <property type="entry name" value="RNase_HII/HIII"/>
</dbReference>
<dbReference type="InterPro" id="IPR024567">
    <property type="entry name" value="RNase_HII/HIII_dom"/>
</dbReference>
<dbReference type="InterPro" id="IPR012337">
    <property type="entry name" value="RNaseH-like_sf"/>
</dbReference>
<dbReference type="InterPro" id="IPR036397">
    <property type="entry name" value="RNaseH_sf"/>
</dbReference>
<dbReference type="NCBIfam" id="NF000594">
    <property type="entry name" value="PRK00015.1-1"/>
    <property type="match status" value="1"/>
</dbReference>
<dbReference type="NCBIfam" id="NF000595">
    <property type="entry name" value="PRK00015.1-3"/>
    <property type="match status" value="1"/>
</dbReference>
<dbReference type="PANTHER" id="PTHR10954">
    <property type="entry name" value="RIBONUCLEASE H2 SUBUNIT A"/>
    <property type="match status" value="1"/>
</dbReference>
<dbReference type="PANTHER" id="PTHR10954:SF18">
    <property type="entry name" value="RIBONUCLEASE HII"/>
    <property type="match status" value="1"/>
</dbReference>
<dbReference type="Pfam" id="PF01351">
    <property type="entry name" value="RNase_HII"/>
    <property type="match status" value="1"/>
</dbReference>
<dbReference type="SUPFAM" id="SSF53098">
    <property type="entry name" value="Ribonuclease H-like"/>
    <property type="match status" value="1"/>
</dbReference>
<dbReference type="PROSITE" id="PS51975">
    <property type="entry name" value="RNASE_H_2"/>
    <property type="match status" value="1"/>
</dbReference>
<comment type="function">
    <text evidence="1">Endonuclease that specifically degrades the RNA of RNA-DNA hybrids.</text>
</comment>
<comment type="catalytic activity">
    <reaction evidence="1">
        <text>Endonucleolytic cleavage to 5'-phosphomonoester.</text>
        <dbReference type="EC" id="3.1.26.4"/>
    </reaction>
</comment>
<comment type="cofactor">
    <cofactor evidence="1">
        <name>Mn(2+)</name>
        <dbReference type="ChEBI" id="CHEBI:29035"/>
    </cofactor>
    <cofactor evidence="1">
        <name>Mg(2+)</name>
        <dbReference type="ChEBI" id="CHEBI:18420"/>
    </cofactor>
    <text evidence="1">Manganese or magnesium. Binds 1 divalent metal ion per monomer in the absence of substrate. May bind a second metal ion after substrate binding.</text>
</comment>
<comment type="subcellular location">
    <subcellularLocation>
        <location evidence="1">Cytoplasm</location>
    </subcellularLocation>
</comment>
<comment type="similarity">
    <text evidence="1">Belongs to the RNase HII family.</text>
</comment>
<organism>
    <name type="scientific">Listeria innocua serovar 6a (strain ATCC BAA-680 / CLIP 11262)</name>
    <dbReference type="NCBI Taxonomy" id="272626"/>
    <lineage>
        <taxon>Bacteria</taxon>
        <taxon>Bacillati</taxon>
        <taxon>Bacillota</taxon>
        <taxon>Bacilli</taxon>
        <taxon>Bacillales</taxon>
        <taxon>Listeriaceae</taxon>
        <taxon>Listeria</taxon>
    </lineage>
</organism>
<proteinExistence type="inferred from homology"/>
<sequence length="261" mass="29111">MSESIAVIREKLSLVTSEQDPFFQLCTQDERKGVQKLLQSTRKKWEKEAKLAAKLIEMKRYETDLFKQGFQYIAGVDEVGRGPLAGPVVAAAVILPADFSVVGINDSKQLNEAKRDILFDVIKEEAISIGIGIIDHDVIDQVNIYEATKIAMRTALEELNPAPDFVLIDAMPLKYSESELSLIKGDTKSISIAAASIIAKVTRDRMMQQYDELYPGYDFANNMGYGTKKHLNGLDTIGICPIHRLSFSPVKEAKLHFESLK</sequence>
<gene>
    <name evidence="1" type="primary">rnhB</name>
    <name type="ordered locus">lin1312</name>
</gene>